<reference key="1">
    <citation type="journal article" date="2007" name="Proc. Natl. Acad. Sci. U.S.A.">
        <title>Genome sequencing and comparative analysis of Saccharomyces cerevisiae strain YJM789.</title>
        <authorList>
            <person name="Wei W."/>
            <person name="McCusker J.H."/>
            <person name="Hyman R.W."/>
            <person name="Jones T."/>
            <person name="Ning Y."/>
            <person name="Cao Z."/>
            <person name="Gu Z."/>
            <person name="Bruno D."/>
            <person name="Miranda M."/>
            <person name="Nguyen M."/>
            <person name="Wilhelmy J."/>
            <person name="Komp C."/>
            <person name="Tamse R."/>
            <person name="Wang X."/>
            <person name="Jia P."/>
            <person name="Luedi P."/>
            <person name="Oefner P.J."/>
            <person name="David L."/>
            <person name="Dietrich F.S."/>
            <person name="Li Y."/>
            <person name="Davis R.W."/>
            <person name="Steinmetz L.M."/>
        </authorList>
    </citation>
    <scope>NUCLEOTIDE SEQUENCE [LARGE SCALE GENOMIC DNA]</scope>
    <source>
        <strain>YJM789</strain>
    </source>
</reference>
<organism>
    <name type="scientific">Saccharomyces cerevisiae (strain YJM789)</name>
    <name type="common">Baker's yeast</name>
    <dbReference type="NCBI Taxonomy" id="307796"/>
    <lineage>
        <taxon>Eukaryota</taxon>
        <taxon>Fungi</taxon>
        <taxon>Dikarya</taxon>
        <taxon>Ascomycota</taxon>
        <taxon>Saccharomycotina</taxon>
        <taxon>Saccharomycetes</taxon>
        <taxon>Saccharomycetales</taxon>
        <taxon>Saccharomycetaceae</taxon>
        <taxon>Saccharomyces</taxon>
    </lineage>
</organism>
<gene>
    <name evidence="2" type="primary">MRI1</name>
    <name type="ORF">SCY_5826</name>
</gene>
<accession>A6ZWZ9</accession>
<dbReference type="EC" id="5.3.1.23" evidence="2"/>
<dbReference type="EMBL" id="AAFW02000135">
    <property type="protein sequence ID" value="EDN61241.1"/>
    <property type="molecule type" value="Genomic_DNA"/>
</dbReference>
<dbReference type="SMR" id="A6ZWZ9"/>
<dbReference type="HOGENOM" id="CLU_016218_1_3_1"/>
<dbReference type="UniPathway" id="UPA00904">
    <property type="reaction ID" value="UER00874"/>
</dbReference>
<dbReference type="Proteomes" id="UP000007060">
    <property type="component" value="Unassembled WGS sequence"/>
</dbReference>
<dbReference type="GO" id="GO:0005737">
    <property type="term" value="C:cytoplasm"/>
    <property type="evidence" value="ECO:0007669"/>
    <property type="project" value="UniProtKB-SubCell"/>
</dbReference>
<dbReference type="GO" id="GO:0005634">
    <property type="term" value="C:nucleus"/>
    <property type="evidence" value="ECO:0007669"/>
    <property type="project" value="UniProtKB-SubCell"/>
</dbReference>
<dbReference type="GO" id="GO:0046523">
    <property type="term" value="F:S-methyl-5-thioribose-1-phosphate isomerase activity"/>
    <property type="evidence" value="ECO:0007669"/>
    <property type="project" value="UniProtKB-UniRule"/>
</dbReference>
<dbReference type="GO" id="GO:0019509">
    <property type="term" value="P:L-methionine salvage from methylthioadenosine"/>
    <property type="evidence" value="ECO:0007669"/>
    <property type="project" value="UniProtKB-UniRule"/>
</dbReference>
<dbReference type="FunFam" id="1.20.120.420:FF:000006">
    <property type="entry name" value="Methylthioribose-1-phosphate isomerase"/>
    <property type="match status" value="1"/>
</dbReference>
<dbReference type="FunFam" id="3.40.50.10470:FF:000026">
    <property type="entry name" value="Methylthioribose-1-phosphate isomerase"/>
    <property type="match status" value="1"/>
</dbReference>
<dbReference type="Gene3D" id="1.20.120.420">
    <property type="entry name" value="translation initiation factor eif-2b, domain 1"/>
    <property type="match status" value="1"/>
</dbReference>
<dbReference type="Gene3D" id="3.40.50.10470">
    <property type="entry name" value="Translation initiation factor eif-2b, domain 2"/>
    <property type="match status" value="1"/>
</dbReference>
<dbReference type="HAMAP" id="MF_01678">
    <property type="entry name" value="Salvage_MtnA"/>
    <property type="match status" value="1"/>
</dbReference>
<dbReference type="InterPro" id="IPR000649">
    <property type="entry name" value="IF-2B-related"/>
</dbReference>
<dbReference type="InterPro" id="IPR005251">
    <property type="entry name" value="IF-M1Pi"/>
</dbReference>
<dbReference type="InterPro" id="IPR042529">
    <property type="entry name" value="IF_2B-like_C"/>
</dbReference>
<dbReference type="InterPro" id="IPR011559">
    <property type="entry name" value="Initiation_fac_2B_a/b/d"/>
</dbReference>
<dbReference type="InterPro" id="IPR027363">
    <property type="entry name" value="M1Pi_N"/>
</dbReference>
<dbReference type="InterPro" id="IPR037171">
    <property type="entry name" value="NagB/RpiA_transferase-like"/>
</dbReference>
<dbReference type="NCBIfam" id="TIGR00524">
    <property type="entry name" value="eIF-2B_rel"/>
    <property type="match status" value="1"/>
</dbReference>
<dbReference type="NCBIfam" id="NF004326">
    <property type="entry name" value="PRK05720.1"/>
    <property type="match status" value="1"/>
</dbReference>
<dbReference type="NCBIfam" id="TIGR00512">
    <property type="entry name" value="salvage_mtnA"/>
    <property type="match status" value="1"/>
</dbReference>
<dbReference type="PANTHER" id="PTHR43475">
    <property type="entry name" value="METHYLTHIORIBOSE-1-PHOSPHATE ISOMERASE"/>
    <property type="match status" value="1"/>
</dbReference>
<dbReference type="PANTHER" id="PTHR43475:SF1">
    <property type="entry name" value="METHYLTHIORIBOSE-1-PHOSPHATE ISOMERASE"/>
    <property type="match status" value="1"/>
</dbReference>
<dbReference type="Pfam" id="PF01008">
    <property type="entry name" value="IF-2B"/>
    <property type="match status" value="1"/>
</dbReference>
<dbReference type="SUPFAM" id="SSF100950">
    <property type="entry name" value="NagB/RpiA/CoA transferase-like"/>
    <property type="match status" value="1"/>
</dbReference>
<feature type="initiator methionine" description="Removed" evidence="1">
    <location>
        <position position="1"/>
    </location>
</feature>
<feature type="chain" id="PRO_0000402051" description="Methylthioribose-1-phosphate isomerase">
    <location>
        <begin position="2"/>
        <end position="411"/>
    </location>
</feature>
<feature type="active site" description="Proton donor" evidence="2">
    <location>
        <position position="280"/>
    </location>
</feature>
<feature type="site" description="Transition state stabilizer" evidence="2">
    <location>
        <position position="181"/>
    </location>
</feature>
<feature type="modified residue" description="N-acetylserine" evidence="1">
    <location>
        <position position="2"/>
    </location>
</feature>
<feature type="modified residue" description="Phosphoserine" evidence="1">
    <location>
        <position position="351"/>
    </location>
</feature>
<protein>
    <recommendedName>
        <fullName evidence="2">Methylthioribose-1-phosphate isomerase</fullName>
        <shortName evidence="2">M1Pi</shortName>
        <shortName evidence="2">MTR-1-P isomerase</shortName>
        <ecNumber evidence="2">5.3.1.23</ecNumber>
    </recommendedName>
    <alternativeName>
        <fullName evidence="2">S-methyl-5-thioribose-1-phosphate isomerase</fullName>
    </alternativeName>
    <alternativeName>
        <fullName evidence="2">Translation initiation factor eIF-2B subunit alpha/beta/delta-like protein</fullName>
    </alternativeName>
</protein>
<name>MTNA_YEAS7</name>
<evidence type="ECO:0000250" key="1">
    <source>
        <dbReference type="UniProtKB" id="Q06489"/>
    </source>
</evidence>
<evidence type="ECO:0000255" key="2">
    <source>
        <dbReference type="HAMAP-Rule" id="MF_03119"/>
    </source>
</evidence>
<sequence length="411" mass="45020">MSLEAIVFDRSEPENVSVKVLDQLLLPYTTKYVPIHTIDDGYSVIKSMQVRGAPAIAIVGSLSVLTEVQLIKHNPTSDVATLYSLVNWESTKTVLNKRLDFLLSSRPTAVNLSNSLVEIKNILKSSSDLKAFDGSLYNYVCELIDEDLANNMKMGDNGAKYLIDVLQKDGFKDEFAVLTICNTGSLATSGYGTALGVIRSLWKDSLAKTDKADSGLDNEKCPRMGHVFPLETRPYNQGSRLTAYELVYDKIPSTLITDSSIAYRIRTSPIPIKAAFVGADRIVRNGDTANKIGTLQLAVICKQFGIKFFVVAPKTTIDNVTETGDDIIVEERNPEEFKVVTGTVINPENGSLILNESGEPITGKVGIAPLEINVWNPAFDITPHELIDGIITEEGVFTKNSSGEFQLESLF</sequence>
<comment type="function">
    <text evidence="2">Catalyzes the interconversion of methylthioribose-1-phosphate (MTR-1-P) into methylthioribulose-1-phosphate (MTRu-1-P).</text>
</comment>
<comment type="catalytic activity">
    <reaction evidence="2">
        <text>5-(methylsulfanyl)-alpha-D-ribose 1-phosphate = 5-(methylsulfanyl)-D-ribulose 1-phosphate</text>
        <dbReference type="Rhea" id="RHEA:19989"/>
        <dbReference type="ChEBI" id="CHEBI:58533"/>
        <dbReference type="ChEBI" id="CHEBI:58548"/>
        <dbReference type="EC" id="5.3.1.23"/>
    </reaction>
</comment>
<comment type="pathway">
    <text evidence="2">Amino-acid biosynthesis; L-methionine biosynthesis via salvage pathway; L-methionine from S-methyl-5-thio-alpha-D-ribose 1-phosphate: step 1/6.</text>
</comment>
<comment type="subunit">
    <text>Homodimer.</text>
</comment>
<comment type="subcellular location">
    <subcellularLocation>
        <location evidence="2">Cytoplasm</location>
    </subcellularLocation>
    <subcellularLocation>
        <location evidence="2">Nucleus</location>
    </subcellularLocation>
</comment>
<comment type="similarity">
    <text evidence="2">Belongs to the eIF-2B alpha/beta/delta subunits family. MtnA subfamily.</text>
</comment>
<proteinExistence type="inferred from homology"/>
<keyword id="KW-0007">Acetylation</keyword>
<keyword id="KW-0028">Amino-acid biosynthesis</keyword>
<keyword id="KW-0963">Cytoplasm</keyword>
<keyword id="KW-0413">Isomerase</keyword>
<keyword id="KW-0486">Methionine biosynthesis</keyword>
<keyword id="KW-0539">Nucleus</keyword>
<keyword id="KW-0597">Phosphoprotein</keyword>